<sequence>MADQLSNEQISEFKEAFSLFDKDGDGTITTKELGTVMRSLGQNPTEAELQDMINEVDQDGSGTIDFPEFLTLMARKMQDSDSEEEIKEAFRVFDKDGNGFISAAELRHIMTNLGEKLTDEEVDEMIREADVDGDGQINYEEFVKMMMSK</sequence>
<proteinExistence type="inferred from homology"/>
<comment type="function">
    <text>Calmodulin mediates the control of a large number of enzymes, ion channels and other proteins by Ca(2+). Among the enzymes to be stimulated by the calmodulin-Ca(2+) complex are a number of protein kinases and phosphatases.</text>
</comment>
<comment type="miscellaneous">
    <text>This protein has four functional calcium-binding sites.</text>
</comment>
<comment type="similarity">
    <text evidence="3">Belongs to the calmodulin family.</text>
</comment>
<organism>
    <name type="scientific">Trypanosoma brucei brucei</name>
    <dbReference type="NCBI Taxonomy" id="5702"/>
    <lineage>
        <taxon>Eukaryota</taxon>
        <taxon>Discoba</taxon>
        <taxon>Euglenozoa</taxon>
        <taxon>Kinetoplastea</taxon>
        <taxon>Metakinetoplastina</taxon>
        <taxon>Trypanosomatida</taxon>
        <taxon>Trypanosomatidae</taxon>
        <taxon>Trypanosoma</taxon>
    </lineage>
</organism>
<accession>P69097</accession>
<accession>P04465</accession>
<protein>
    <recommendedName>
        <fullName>Calmodulin</fullName>
        <shortName>CaM</shortName>
    </recommendedName>
</protein>
<feature type="initiator methionine" description="Removed" evidence="1">
    <location>
        <position position="1"/>
    </location>
</feature>
<feature type="chain" id="PRO_0000198275" description="Calmodulin">
    <location>
        <begin position="2"/>
        <end position="149"/>
    </location>
</feature>
<feature type="domain" description="EF-hand 1" evidence="2">
    <location>
        <begin position="8"/>
        <end position="43"/>
    </location>
</feature>
<feature type="domain" description="EF-hand 2" evidence="2">
    <location>
        <begin position="44"/>
        <end position="79"/>
    </location>
</feature>
<feature type="domain" description="EF-hand 3" evidence="2">
    <location>
        <begin position="81"/>
        <end position="116"/>
    </location>
</feature>
<feature type="domain" description="EF-hand 4" evidence="2">
    <location>
        <begin position="117"/>
        <end position="149"/>
    </location>
</feature>
<feature type="binding site" evidence="2">
    <location>
        <position position="21"/>
    </location>
    <ligand>
        <name>Ca(2+)</name>
        <dbReference type="ChEBI" id="CHEBI:29108"/>
        <label>1</label>
    </ligand>
</feature>
<feature type="binding site" evidence="2">
    <location>
        <position position="23"/>
    </location>
    <ligand>
        <name>Ca(2+)</name>
        <dbReference type="ChEBI" id="CHEBI:29108"/>
        <label>1</label>
    </ligand>
</feature>
<feature type="binding site" evidence="2">
    <location>
        <position position="25"/>
    </location>
    <ligand>
        <name>Ca(2+)</name>
        <dbReference type="ChEBI" id="CHEBI:29108"/>
        <label>1</label>
    </ligand>
</feature>
<feature type="binding site" evidence="2">
    <location>
        <position position="27"/>
    </location>
    <ligand>
        <name>Ca(2+)</name>
        <dbReference type="ChEBI" id="CHEBI:29108"/>
        <label>1</label>
    </ligand>
</feature>
<feature type="binding site" evidence="2">
    <location>
        <position position="32"/>
    </location>
    <ligand>
        <name>Ca(2+)</name>
        <dbReference type="ChEBI" id="CHEBI:29108"/>
        <label>1</label>
    </ligand>
</feature>
<feature type="binding site" evidence="2">
    <location>
        <position position="57"/>
    </location>
    <ligand>
        <name>Ca(2+)</name>
        <dbReference type="ChEBI" id="CHEBI:29108"/>
        <label>2</label>
    </ligand>
</feature>
<feature type="binding site" evidence="2">
    <location>
        <position position="59"/>
    </location>
    <ligand>
        <name>Ca(2+)</name>
        <dbReference type="ChEBI" id="CHEBI:29108"/>
        <label>2</label>
    </ligand>
</feature>
<feature type="binding site" evidence="2">
    <location>
        <position position="61"/>
    </location>
    <ligand>
        <name>Ca(2+)</name>
        <dbReference type="ChEBI" id="CHEBI:29108"/>
        <label>2</label>
    </ligand>
</feature>
<feature type="binding site" evidence="2">
    <location>
        <position position="63"/>
    </location>
    <ligand>
        <name>Ca(2+)</name>
        <dbReference type="ChEBI" id="CHEBI:29108"/>
        <label>2</label>
    </ligand>
</feature>
<feature type="binding site" evidence="2">
    <location>
        <position position="68"/>
    </location>
    <ligand>
        <name>Ca(2+)</name>
        <dbReference type="ChEBI" id="CHEBI:29108"/>
        <label>2</label>
    </ligand>
</feature>
<feature type="binding site" evidence="2">
    <location>
        <position position="94"/>
    </location>
    <ligand>
        <name>Ca(2+)</name>
        <dbReference type="ChEBI" id="CHEBI:29108"/>
        <label>3</label>
    </ligand>
</feature>
<feature type="binding site" evidence="2">
    <location>
        <position position="96"/>
    </location>
    <ligand>
        <name>Ca(2+)</name>
        <dbReference type="ChEBI" id="CHEBI:29108"/>
        <label>3</label>
    </ligand>
</feature>
<feature type="binding site" evidence="2">
    <location>
        <position position="98"/>
    </location>
    <ligand>
        <name>Ca(2+)</name>
        <dbReference type="ChEBI" id="CHEBI:29108"/>
        <label>3</label>
    </ligand>
</feature>
<feature type="binding site" evidence="2">
    <location>
        <position position="105"/>
    </location>
    <ligand>
        <name>Ca(2+)</name>
        <dbReference type="ChEBI" id="CHEBI:29108"/>
        <label>3</label>
    </ligand>
</feature>
<feature type="binding site" evidence="2">
    <location>
        <position position="130"/>
    </location>
    <ligand>
        <name>Ca(2+)</name>
        <dbReference type="ChEBI" id="CHEBI:29108"/>
        <label>4</label>
    </ligand>
</feature>
<feature type="binding site" evidence="2">
    <location>
        <position position="132"/>
    </location>
    <ligand>
        <name>Ca(2+)</name>
        <dbReference type="ChEBI" id="CHEBI:29108"/>
        <label>4</label>
    </ligand>
</feature>
<feature type="binding site" evidence="2">
    <location>
        <position position="134"/>
    </location>
    <ligand>
        <name>Ca(2+)</name>
        <dbReference type="ChEBI" id="CHEBI:29108"/>
        <label>4</label>
    </ligand>
</feature>
<feature type="binding site" evidence="2">
    <location>
        <position position="136"/>
    </location>
    <ligand>
        <name>Ca(2+)</name>
        <dbReference type="ChEBI" id="CHEBI:29108"/>
        <label>4</label>
    </ligand>
</feature>
<feature type="binding site" evidence="2">
    <location>
        <position position="141"/>
    </location>
    <ligand>
        <name>Ca(2+)</name>
        <dbReference type="ChEBI" id="CHEBI:29108"/>
        <label>4</label>
    </ligand>
</feature>
<feature type="modified residue" description="N6,N6,N6-trimethyllysine" evidence="1">
    <location>
        <position position="116"/>
    </location>
</feature>
<name>CALM_TRYBB</name>
<keyword id="KW-0106">Calcium</keyword>
<keyword id="KW-0479">Metal-binding</keyword>
<keyword id="KW-0488">Methylation</keyword>
<keyword id="KW-0677">Repeat</keyword>
<evidence type="ECO:0000250" key="1"/>
<evidence type="ECO:0000255" key="2">
    <source>
        <dbReference type="PROSITE-ProRule" id="PRU00448"/>
    </source>
</evidence>
<evidence type="ECO:0000305" key="3"/>
<reference key="1">
    <citation type="journal article" date="1992" name="Mol. Gen. Genet.">
        <title>Identification of a new EF-hand superfamily member from Trypanosoma brucei.</title>
        <authorList>
            <person name="Wong S."/>
            <person name="Kretsinger R.H."/>
            <person name="Campbell D.A."/>
        </authorList>
    </citation>
    <scope>NUCLEOTIDE SEQUENCE [GENOMIC DNA]</scope>
    <source>
        <strain>427</strain>
    </source>
</reference>
<dbReference type="EMBL" id="X56511">
    <property type="protein sequence ID" value="CAA39861.1"/>
    <property type="molecule type" value="Genomic_DNA"/>
</dbReference>
<dbReference type="PIR" id="A48111">
    <property type="entry name" value="A48111"/>
</dbReference>
<dbReference type="SMR" id="P69097"/>
<dbReference type="GO" id="GO:0005930">
    <property type="term" value="C:axoneme"/>
    <property type="evidence" value="ECO:0000314"/>
    <property type="project" value="GeneDB"/>
</dbReference>
<dbReference type="GO" id="GO:0005929">
    <property type="term" value="C:cilium"/>
    <property type="evidence" value="ECO:0000314"/>
    <property type="project" value="GeneDB"/>
</dbReference>
<dbReference type="GO" id="GO:0016460">
    <property type="term" value="C:myosin II complex"/>
    <property type="evidence" value="ECO:0007669"/>
    <property type="project" value="TreeGrafter"/>
</dbReference>
<dbReference type="GO" id="GO:0097740">
    <property type="term" value="C:paraflagellar rod"/>
    <property type="evidence" value="ECO:0000314"/>
    <property type="project" value="GeneDB"/>
</dbReference>
<dbReference type="GO" id="GO:0005509">
    <property type="term" value="F:calcium ion binding"/>
    <property type="evidence" value="ECO:0000314"/>
    <property type="project" value="GeneDB"/>
</dbReference>
<dbReference type="CDD" id="cd00051">
    <property type="entry name" value="EFh"/>
    <property type="match status" value="2"/>
</dbReference>
<dbReference type="FunFam" id="1.10.238.10:FF:000034">
    <property type="entry name" value="Calmodulin"/>
    <property type="match status" value="1"/>
</dbReference>
<dbReference type="FunFam" id="1.10.238.10:FF:000006">
    <property type="entry name" value="Calmodulin 1"/>
    <property type="match status" value="1"/>
</dbReference>
<dbReference type="Gene3D" id="1.10.238.10">
    <property type="entry name" value="EF-hand"/>
    <property type="match status" value="3"/>
</dbReference>
<dbReference type="InterPro" id="IPR050230">
    <property type="entry name" value="CALM/Myosin/TropC-like"/>
</dbReference>
<dbReference type="InterPro" id="IPR011992">
    <property type="entry name" value="EF-hand-dom_pair"/>
</dbReference>
<dbReference type="InterPro" id="IPR018247">
    <property type="entry name" value="EF_Hand_1_Ca_BS"/>
</dbReference>
<dbReference type="InterPro" id="IPR002048">
    <property type="entry name" value="EF_hand_dom"/>
</dbReference>
<dbReference type="PANTHER" id="PTHR23048:SF0">
    <property type="entry name" value="CALMODULIN LIKE 3"/>
    <property type="match status" value="1"/>
</dbReference>
<dbReference type="PANTHER" id="PTHR23048">
    <property type="entry name" value="MYOSIN LIGHT CHAIN 1, 3"/>
    <property type="match status" value="1"/>
</dbReference>
<dbReference type="Pfam" id="PF13499">
    <property type="entry name" value="EF-hand_7"/>
    <property type="match status" value="2"/>
</dbReference>
<dbReference type="SMART" id="SM00054">
    <property type="entry name" value="EFh"/>
    <property type="match status" value="4"/>
</dbReference>
<dbReference type="SUPFAM" id="SSF47473">
    <property type="entry name" value="EF-hand"/>
    <property type="match status" value="1"/>
</dbReference>
<dbReference type="PROSITE" id="PS00018">
    <property type="entry name" value="EF_HAND_1"/>
    <property type="match status" value="4"/>
</dbReference>
<dbReference type="PROSITE" id="PS50222">
    <property type="entry name" value="EF_HAND_2"/>
    <property type="match status" value="4"/>
</dbReference>